<gene>
    <name type="ordered locus">Os03g0283200</name>
    <name type="ordered locus">LOC_Os03g17480</name>
    <name type="ORF">OsJ_009979</name>
</gene>
<keyword id="KW-1185">Reference proteome</keyword>
<comment type="similarity">
    <text evidence="2">Belongs to the GST superfamily. HSP26 family.</text>
</comment>
<comment type="sequence caution" evidence="2">
    <conflict type="erroneous gene model prediction">
        <sequence resource="EMBL-CDS" id="AAN64486"/>
    </conflict>
</comment>
<comment type="sequence caution" evidence="2">
    <conflict type="erroneous gene model prediction">
        <sequence resource="EMBL-CDS" id="EAZ26496"/>
    </conflict>
</comment>
<accession>Q10N44</accession>
<accession>A0A0P0VW83</accession>
<accession>Q8H8U4</accession>
<accession>Q9M578</accession>
<organism>
    <name type="scientific">Oryza sativa subsp. japonica</name>
    <name type="common">Rice</name>
    <dbReference type="NCBI Taxonomy" id="39947"/>
    <lineage>
        <taxon>Eukaryota</taxon>
        <taxon>Viridiplantae</taxon>
        <taxon>Streptophyta</taxon>
        <taxon>Embryophyta</taxon>
        <taxon>Tracheophyta</taxon>
        <taxon>Spermatophyta</taxon>
        <taxon>Magnoliopsida</taxon>
        <taxon>Liliopsida</taxon>
        <taxon>Poales</taxon>
        <taxon>Poaceae</taxon>
        <taxon>BOP clade</taxon>
        <taxon>Oryzoideae</taxon>
        <taxon>Oryzeae</taxon>
        <taxon>Oryzinae</taxon>
        <taxon>Oryza</taxon>
        <taxon>Oryza sativa</taxon>
    </lineage>
</organism>
<dbReference type="EMBL" id="AF237487">
    <property type="protein sequence ID" value="AAF70831.1"/>
    <property type="molecule type" value="mRNA"/>
</dbReference>
<dbReference type="EMBL" id="AC084405">
    <property type="protein sequence ID" value="AAN64486.1"/>
    <property type="status" value="ALT_SEQ"/>
    <property type="molecule type" value="Genomic_DNA"/>
</dbReference>
<dbReference type="EMBL" id="DP000009">
    <property type="protein sequence ID" value="ABF95328.1"/>
    <property type="molecule type" value="Genomic_DNA"/>
</dbReference>
<dbReference type="EMBL" id="AP008209">
    <property type="protein sequence ID" value="BAF11666.1"/>
    <property type="molecule type" value="Genomic_DNA"/>
</dbReference>
<dbReference type="EMBL" id="AP014959">
    <property type="protein sequence ID" value="BAS83591.1"/>
    <property type="molecule type" value="Genomic_DNA"/>
</dbReference>
<dbReference type="EMBL" id="CM000140">
    <property type="protein sequence ID" value="EAZ26496.1"/>
    <property type="status" value="ALT_SEQ"/>
    <property type="molecule type" value="Genomic_DNA"/>
</dbReference>
<dbReference type="RefSeq" id="XP_015630361.1">
    <property type="nucleotide sequence ID" value="XM_015774875.1"/>
</dbReference>
<dbReference type="SMR" id="Q10N44"/>
<dbReference type="FunCoup" id="Q10N44">
    <property type="interactions" value="243"/>
</dbReference>
<dbReference type="STRING" id="39947.Q10N44"/>
<dbReference type="PaxDb" id="39947-Q10N44"/>
<dbReference type="EnsemblPlants" id="Os03t0283200-00">
    <property type="protein sequence ID" value="Os03t0283200-00"/>
    <property type="gene ID" value="Os03g0283200"/>
</dbReference>
<dbReference type="Gramene" id="Os03t0283200-00">
    <property type="protein sequence ID" value="Os03t0283200-00"/>
    <property type="gene ID" value="Os03g0283200"/>
</dbReference>
<dbReference type="KEGG" id="dosa:Os03g0283200"/>
<dbReference type="eggNOG" id="KOG0406">
    <property type="taxonomic scope" value="Eukaryota"/>
</dbReference>
<dbReference type="HOGENOM" id="CLU_072699_0_1_1"/>
<dbReference type="InParanoid" id="Q10N44"/>
<dbReference type="OMA" id="ERIQIYY"/>
<dbReference type="OrthoDB" id="4951845at2759"/>
<dbReference type="Proteomes" id="UP000000763">
    <property type="component" value="Chromosome 3"/>
</dbReference>
<dbReference type="Proteomes" id="UP000007752">
    <property type="component" value="Chromosome 3"/>
</dbReference>
<dbReference type="Proteomes" id="UP000059680">
    <property type="component" value="Chromosome 3"/>
</dbReference>
<dbReference type="GO" id="GO:0004364">
    <property type="term" value="F:glutathione transferase activity"/>
    <property type="evidence" value="ECO:0000318"/>
    <property type="project" value="GO_Central"/>
</dbReference>
<dbReference type="CDD" id="cd03203">
    <property type="entry name" value="GST_C_Lambda"/>
    <property type="match status" value="1"/>
</dbReference>
<dbReference type="FunFam" id="3.40.30.10:FF:000091">
    <property type="entry name" value="Glutathione S-transferase L2, chloroplastic"/>
    <property type="match status" value="1"/>
</dbReference>
<dbReference type="FunFam" id="1.20.1050.10:FF:000041">
    <property type="entry name" value="Lambda class glutathione S-transferase"/>
    <property type="match status" value="1"/>
</dbReference>
<dbReference type="Gene3D" id="1.20.1050.10">
    <property type="match status" value="1"/>
</dbReference>
<dbReference type="Gene3D" id="3.40.30.10">
    <property type="entry name" value="Glutaredoxin"/>
    <property type="match status" value="1"/>
</dbReference>
<dbReference type="InterPro" id="IPR036282">
    <property type="entry name" value="Glutathione-S-Trfase_C_sf"/>
</dbReference>
<dbReference type="InterPro" id="IPR040079">
    <property type="entry name" value="Glutathione_S-Trfase"/>
</dbReference>
<dbReference type="InterPro" id="IPR004045">
    <property type="entry name" value="Glutathione_S-Trfase_N"/>
</dbReference>
<dbReference type="InterPro" id="IPR044629">
    <property type="entry name" value="GSTL1/2/3"/>
</dbReference>
<dbReference type="InterPro" id="IPR036249">
    <property type="entry name" value="Thioredoxin-like_sf"/>
</dbReference>
<dbReference type="PANTHER" id="PTHR44328">
    <property type="entry name" value="GLUTATHIONE S-TRANSFERASE L1"/>
    <property type="match status" value="1"/>
</dbReference>
<dbReference type="PANTHER" id="PTHR44328:SF5">
    <property type="entry name" value="PROTEIN IN2-1 HOMOLOG A"/>
    <property type="match status" value="1"/>
</dbReference>
<dbReference type="Pfam" id="PF13410">
    <property type="entry name" value="GST_C_2"/>
    <property type="match status" value="1"/>
</dbReference>
<dbReference type="Pfam" id="PF13417">
    <property type="entry name" value="GST_N_3"/>
    <property type="match status" value="1"/>
</dbReference>
<dbReference type="SFLD" id="SFLDS00019">
    <property type="entry name" value="Glutathione_Transferase_(cytos"/>
    <property type="match status" value="1"/>
</dbReference>
<dbReference type="SFLD" id="SFLDG00358">
    <property type="entry name" value="Main_(cytGST)"/>
    <property type="match status" value="1"/>
</dbReference>
<dbReference type="SUPFAM" id="SSF47616">
    <property type="entry name" value="GST C-terminal domain-like"/>
    <property type="match status" value="1"/>
</dbReference>
<dbReference type="SUPFAM" id="SSF52833">
    <property type="entry name" value="Thioredoxin-like"/>
    <property type="match status" value="1"/>
</dbReference>
<dbReference type="PROSITE" id="PS50405">
    <property type="entry name" value="GST_CTER"/>
    <property type="match status" value="1"/>
</dbReference>
<dbReference type="PROSITE" id="PS50404">
    <property type="entry name" value="GST_NTER"/>
    <property type="match status" value="1"/>
</dbReference>
<name>IN21A_ORYSJ</name>
<proteinExistence type="evidence at transcript level"/>
<feature type="chain" id="PRO_0000361765" description="Protein IN2-1 homolog A">
    <location>
        <begin position="1"/>
        <end position="243"/>
    </location>
</feature>
<feature type="domain" description="GST N-terminal">
    <location>
        <begin position="31"/>
        <end position="112"/>
    </location>
</feature>
<feature type="domain" description="GST C-terminal">
    <location>
        <begin position="117"/>
        <end position="240"/>
    </location>
</feature>
<feature type="binding site" evidence="1">
    <location>
        <position position="70"/>
    </location>
    <ligand>
        <name>glutathione</name>
        <dbReference type="ChEBI" id="CHEBI:57925"/>
    </ligand>
</feature>
<feature type="binding site" evidence="1">
    <location>
        <position position="84"/>
    </location>
    <ligand>
        <name>glutathione</name>
        <dbReference type="ChEBI" id="CHEBI:57925"/>
    </ligand>
</feature>
<feature type="binding site" evidence="1">
    <location>
        <begin position="96"/>
        <end position="97"/>
    </location>
    <ligand>
        <name>glutathione</name>
        <dbReference type="ChEBI" id="CHEBI:57925"/>
    </ligand>
</feature>
<protein>
    <recommendedName>
        <fullName>Protein IN2-1 homolog A</fullName>
    </recommendedName>
</protein>
<evidence type="ECO:0000250" key="1"/>
<evidence type="ECO:0000305" key="2"/>
<reference key="1">
    <citation type="submission" date="2000-05" db="EMBL/GenBank/DDBJ databases">
        <title>Rice xig cDNA.</title>
        <authorList>
            <person name="Zhang Y."/>
            <person name="Wang X."/>
            <person name="Cao K."/>
            <person name="Sun C."/>
        </authorList>
    </citation>
    <scope>NUCLEOTIDE SEQUENCE [MRNA]</scope>
</reference>
<reference key="2">
    <citation type="journal article" date="2005" name="Genome Res.">
        <title>Sequence, annotation, and analysis of synteny between rice chromosome 3 and diverged grass species.</title>
        <authorList>
            <consortium name="The rice chromosome 3 sequencing consortium"/>
            <person name="Buell C.R."/>
            <person name="Yuan Q."/>
            <person name="Ouyang S."/>
            <person name="Liu J."/>
            <person name="Zhu W."/>
            <person name="Wang A."/>
            <person name="Maiti R."/>
            <person name="Haas B."/>
            <person name="Wortman J."/>
            <person name="Pertea M."/>
            <person name="Jones K.M."/>
            <person name="Kim M."/>
            <person name="Overton L."/>
            <person name="Tsitrin T."/>
            <person name="Fadrosh D."/>
            <person name="Bera J."/>
            <person name="Weaver B."/>
            <person name="Jin S."/>
            <person name="Johri S."/>
            <person name="Reardon M."/>
            <person name="Webb K."/>
            <person name="Hill J."/>
            <person name="Moffat K."/>
            <person name="Tallon L."/>
            <person name="Van Aken S."/>
            <person name="Lewis M."/>
            <person name="Utterback T."/>
            <person name="Feldblyum T."/>
            <person name="Zismann V."/>
            <person name="Iobst S."/>
            <person name="Hsiao J."/>
            <person name="de Vazeille A.R."/>
            <person name="Salzberg S.L."/>
            <person name="White O."/>
            <person name="Fraser C.M."/>
            <person name="Yu Y."/>
            <person name="Kim H."/>
            <person name="Rambo T."/>
            <person name="Currie J."/>
            <person name="Collura K."/>
            <person name="Kernodle-Thompson S."/>
            <person name="Wei F."/>
            <person name="Kudrna K."/>
            <person name="Ammiraju J.S.S."/>
            <person name="Luo M."/>
            <person name="Goicoechea J.L."/>
            <person name="Wing R.A."/>
            <person name="Henry D."/>
            <person name="Oates R."/>
            <person name="Palmer M."/>
            <person name="Pries G."/>
            <person name="Saski C."/>
            <person name="Simmons J."/>
            <person name="Soderlund C."/>
            <person name="Nelson W."/>
            <person name="de la Bastide M."/>
            <person name="Spiegel L."/>
            <person name="Nascimento L."/>
            <person name="Huang E."/>
            <person name="Preston R."/>
            <person name="Zutavern T."/>
            <person name="Palmer L."/>
            <person name="O'Shaughnessy A."/>
            <person name="Dike S."/>
            <person name="McCombie W.R."/>
            <person name="Minx P."/>
            <person name="Cordum H."/>
            <person name="Wilson R."/>
            <person name="Jin W."/>
            <person name="Lee H.R."/>
            <person name="Jiang J."/>
            <person name="Jackson S."/>
        </authorList>
    </citation>
    <scope>NUCLEOTIDE SEQUENCE [LARGE SCALE GENOMIC DNA]</scope>
    <source>
        <strain>cv. Nipponbare</strain>
    </source>
</reference>
<reference key="3">
    <citation type="journal article" date="2005" name="Nature">
        <title>The map-based sequence of the rice genome.</title>
        <authorList>
            <consortium name="International rice genome sequencing project (IRGSP)"/>
        </authorList>
    </citation>
    <scope>NUCLEOTIDE SEQUENCE [LARGE SCALE GENOMIC DNA]</scope>
    <source>
        <strain>cv. Nipponbare</strain>
    </source>
</reference>
<reference key="4">
    <citation type="journal article" date="2008" name="Nucleic Acids Res.">
        <title>The rice annotation project database (RAP-DB): 2008 update.</title>
        <authorList>
            <consortium name="The rice annotation project (RAP)"/>
        </authorList>
    </citation>
    <scope>GENOME REANNOTATION</scope>
    <source>
        <strain>cv. Nipponbare</strain>
    </source>
</reference>
<reference key="5">
    <citation type="journal article" date="2013" name="Rice">
        <title>Improvement of the Oryza sativa Nipponbare reference genome using next generation sequence and optical map data.</title>
        <authorList>
            <person name="Kawahara Y."/>
            <person name="de la Bastide M."/>
            <person name="Hamilton J.P."/>
            <person name="Kanamori H."/>
            <person name="McCombie W.R."/>
            <person name="Ouyang S."/>
            <person name="Schwartz D.C."/>
            <person name="Tanaka T."/>
            <person name="Wu J."/>
            <person name="Zhou S."/>
            <person name="Childs K.L."/>
            <person name="Davidson R.M."/>
            <person name="Lin H."/>
            <person name="Quesada-Ocampo L."/>
            <person name="Vaillancourt B."/>
            <person name="Sakai H."/>
            <person name="Lee S.S."/>
            <person name="Kim J."/>
            <person name="Numa H."/>
            <person name="Itoh T."/>
            <person name="Buell C.R."/>
            <person name="Matsumoto T."/>
        </authorList>
    </citation>
    <scope>GENOME REANNOTATION</scope>
    <source>
        <strain>cv. Nipponbare</strain>
    </source>
</reference>
<reference key="6">
    <citation type="journal article" date="2005" name="PLoS Biol.">
        <title>The genomes of Oryza sativa: a history of duplications.</title>
        <authorList>
            <person name="Yu J."/>
            <person name="Wang J."/>
            <person name="Lin W."/>
            <person name="Li S."/>
            <person name="Li H."/>
            <person name="Zhou J."/>
            <person name="Ni P."/>
            <person name="Dong W."/>
            <person name="Hu S."/>
            <person name="Zeng C."/>
            <person name="Zhang J."/>
            <person name="Zhang Y."/>
            <person name="Li R."/>
            <person name="Xu Z."/>
            <person name="Li S."/>
            <person name="Li X."/>
            <person name="Zheng H."/>
            <person name="Cong L."/>
            <person name="Lin L."/>
            <person name="Yin J."/>
            <person name="Geng J."/>
            <person name="Li G."/>
            <person name="Shi J."/>
            <person name="Liu J."/>
            <person name="Lv H."/>
            <person name="Li J."/>
            <person name="Wang J."/>
            <person name="Deng Y."/>
            <person name="Ran L."/>
            <person name="Shi X."/>
            <person name="Wang X."/>
            <person name="Wu Q."/>
            <person name="Li C."/>
            <person name="Ren X."/>
            <person name="Wang J."/>
            <person name="Wang X."/>
            <person name="Li D."/>
            <person name="Liu D."/>
            <person name="Zhang X."/>
            <person name="Ji Z."/>
            <person name="Zhao W."/>
            <person name="Sun Y."/>
            <person name="Zhang Z."/>
            <person name="Bao J."/>
            <person name="Han Y."/>
            <person name="Dong L."/>
            <person name="Ji J."/>
            <person name="Chen P."/>
            <person name="Wu S."/>
            <person name="Liu J."/>
            <person name="Xiao Y."/>
            <person name="Bu D."/>
            <person name="Tan J."/>
            <person name="Yang L."/>
            <person name="Ye C."/>
            <person name="Zhang J."/>
            <person name="Xu J."/>
            <person name="Zhou Y."/>
            <person name="Yu Y."/>
            <person name="Zhang B."/>
            <person name="Zhuang S."/>
            <person name="Wei H."/>
            <person name="Liu B."/>
            <person name="Lei M."/>
            <person name="Yu H."/>
            <person name="Li Y."/>
            <person name="Xu H."/>
            <person name="Wei S."/>
            <person name="He X."/>
            <person name="Fang L."/>
            <person name="Zhang Z."/>
            <person name="Zhang Y."/>
            <person name="Huang X."/>
            <person name="Su Z."/>
            <person name="Tong W."/>
            <person name="Li J."/>
            <person name="Tong Z."/>
            <person name="Li S."/>
            <person name="Ye J."/>
            <person name="Wang L."/>
            <person name="Fang L."/>
            <person name="Lei T."/>
            <person name="Chen C.-S."/>
            <person name="Chen H.-C."/>
            <person name="Xu Z."/>
            <person name="Li H."/>
            <person name="Huang H."/>
            <person name="Zhang F."/>
            <person name="Xu H."/>
            <person name="Li N."/>
            <person name="Zhao C."/>
            <person name="Li S."/>
            <person name="Dong L."/>
            <person name="Huang Y."/>
            <person name="Li L."/>
            <person name="Xi Y."/>
            <person name="Qi Q."/>
            <person name="Li W."/>
            <person name="Zhang B."/>
            <person name="Hu W."/>
            <person name="Zhang Y."/>
            <person name="Tian X."/>
            <person name="Jiao Y."/>
            <person name="Liang X."/>
            <person name="Jin J."/>
            <person name="Gao L."/>
            <person name="Zheng W."/>
            <person name="Hao B."/>
            <person name="Liu S.-M."/>
            <person name="Wang W."/>
            <person name="Yuan L."/>
            <person name="Cao M."/>
            <person name="McDermott J."/>
            <person name="Samudrala R."/>
            <person name="Wang J."/>
            <person name="Wong G.K.-S."/>
            <person name="Yang H."/>
        </authorList>
    </citation>
    <scope>NUCLEOTIDE SEQUENCE [LARGE SCALE GENOMIC DNA]</scope>
    <source>
        <strain>cv. Nipponbare</strain>
    </source>
</reference>
<sequence length="243" mass="27299">MAAAAAPRSSGKEALPAALGSASEPPRLFDGTTRLYICYFCPFAQRAWIIRNFKGLQDKIELVGIDLQDKPAWYKEKVYEQGTVPSLEHNGKIMGESLDLIKYIDSHFEGPALLPEDPEKRQFADELIAYANAFTKALYSPLISKADLSAETVAALDKIEAALSKFGDGPFFLGQFSLVDIAYVTIIERIQIYYSHIRKYEITNGRPNLEKFIEEINRIEAYTQTKNDPLYLLDLAKTHLKVA</sequence>